<dbReference type="EMBL" id="CP000423">
    <property type="protein sequence ID" value="ABJ71611.1"/>
    <property type="molecule type" value="Genomic_DNA"/>
</dbReference>
<dbReference type="RefSeq" id="WP_011675076.1">
    <property type="nucleotide sequence ID" value="NC_008526.1"/>
</dbReference>
<dbReference type="RefSeq" id="YP_808053.1">
    <property type="nucleotide sequence ID" value="NC_008526.1"/>
</dbReference>
<dbReference type="SMR" id="Q033L1"/>
<dbReference type="STRING" id="321967.LSEI_2903"/>
<dbReference type="PaxDb" id="321967-LSEI_2903"/>
<dbReference type="KEGG" id="lca:LSEI_2903"/>
<dbReference type="PATRIC" id="fig|321967.11.peg.2848"/>
<dbReference type="HOGENOM" id="CLU_007831_2_2_9"/>
<dbReference type="Proteomes" id="UP000001651">
    <property type="component" value="Chromosome"/>
</dbReference>
<dbReference type="GO" id="GO:0005829">
    <property type="term" value="C:cytosol"/>
    <property type="evidence" value="ECO:0007669"/>
    <property type="project" value="TreeGrafter"/>
</dbReference>
<dbReference type="GO" id="GO:0050660">
    <property type="term" value="F:flavin adenine dinucleotide binding"/>
    <property type="evidence" value="ECO:0007669"/>
    <property type="project" value="UniProtKB-UniRule"/>
</dbReference>
<dbReference type="GO" id="GO:0030488">
    <property type="term" value="P:tRNA methylation"/>
    <property type="evidence" value="ECO:0007669"/>
    <property type="project" value="TreeGrafter"/>
</dbReference>
<dbReference type="GO" id="GO:0002098">
    <property type="term" value="P:tRNA wobble uridine modification"/>
    <property type="evidence" value="ECO:0007669"/>
    <property type="project" value="InterPro"/>
</dbReference>
<dbReference type="FunFam" id="1.10.10.1800:FF:000001">
    <property type="entry name" value="tRNA uridine 5-carboxymethylaminomethyl modification enzyme MnmG"/>
    <property type="match status" value="1"/>
</dbReference>
<dbReference type="FunFam" id="1.10.150.570:FF:000001">
    <property type="entry name" value="tRNA uridine 5-carboxymethylaminomethyl modification enzyme MnmG"/>
    <property type="match status" value="1"/>
</dbReference>
<dbReference type="FunFam" id="3.50.50.60:FF:000002">
    <property type="entry name" value="tRNA uridine 5-carboxymethylaminomethyl modification enzyme MnmG"/>
    <property type="match status" value="1"/>
</dbReference>
<dbReference type="FunFam" id="3.50.50.60:FF:000063">
    <property type="entry name" value="tRNA uridine 5-carboxymethylaminomethyl modification enzyme MnmG"/>
    <property type="match status" value="1"/>
</dbReference>
<dbReference type="Gene3D" id="3.50.50.60">
    <property type="entry name" value="FAD/NAD(P)-binding domain"/>
    <property type="match status" value="2"/>
</dbReference>
<dbReference type="Gene3D" id="1.10.150.570">
    <property type="entry name" value="GidA associated domain, C-terminal subdomain"/>
    <property type="match status" value="1"/>
</dbReference>
<dbReference type="Gene3D" id="1.10.10.1800">
    <property type="entry name" value="tRNA uridine 5-carboxymethylaminomethyl modification enzyme MnmG/GidA"/>
    <property type="match status" value="1"/>
</dbReference>
<dbReference type="HAMAP" id="MF_00129">
    <property type="entry name" value="MnmG_GidA"/>
    <property type="match status" value="1"/>
</dbReference>
<dbReference type="InterPro" id="IPR036188">
    <property type="entry name" value="FAD/NAD-bd_sf"/>
</dbReference>
<dbReference type="InterPro" id="IPR049312">
    <property type="entry name" value="GIDA_C_N"/>
</dbReference>
<dbReference type="InterPro" id="IPR004416">
    <property type="entry name" value="MnmG"/>
</dbReference>
<dbReference type="InterPro" id="IPR002218">
    <property type="entry name" value="MnmG-rel"/>
</dbReference>
<dbReference type="InterPro" id="IPR020595">
    <property type="entry name" value="MnmG-rel_CS"/>
</dbReference>
<dbReference type="InterPro" id="IPR026904">
    <property type="entry name" value="MnmG_C"/>
</dbReference>
<dbReference type="InterPro" id="IPR047001">
    <property type="entry name" value="MnmG_C_subdom"/>
</dbReference>
<dbReference type="InterPro" id="IPR044920">
    <property type="entry name" value="MnmG_C_subdom_sf"/>
</dbReference>
<dbReference type="InterPro" id="IPR040131">
    <property type="entry name" value="MnmG_N"/>
</dbReference>
<dbReference type="NCBIfam" id="TIGR00136">
    <property type="entry name" value="mnmG_gidA"/>
    <property type="match status" value="1"/>
</dbReference>
<dbReference type="PANTHER" id="PTHR11806">
    <property type="entry name" value="GLUCOSE INHIBITED DIVISION PROTEIN A"/>
    <property type="match status" value="1"/>
</dbReference>
<dbReference type="PANTHER" id="PTHR11806:SF0">
    <property type="entry name" value="PROTEIN MTO1 HOMOLOG, MITOCHONDRIAL"/>
    <property type="match status" value="1"/>
</dbReference>
<dbReference type="Pfam" id="PF01134">
    <property type="entry name" value="GIDA"/>
    <property type="match status" value="1"/>
</dbReference>
<dbReference type="Pfam" id="PF21680">
    <property type="entry name" value="GIDA_C_1st"/>
    <property type="match status" value="1"/>
</dbReference>
<dbReference type="Pfam" id="PF13932">
    <property type="entry name" value="SAM_GIDA_C"/>
    <property type="match status" value="1"/>
</dbReference>
<dbReference type="PRINTS" id="PR00368">
    <property type="entry name" value="FADPNR"/>
</dbReference>
<dbReference type="PRINTS" id="PR00411">
    <property type="entry name" value="PNDRDTASEI"/>
</dbReference>
<dbReference type="SMART" id="SM01228">
    <property type="entry name" value="GIDA_assoc_3"/>
    <property type="match status" value="1"/>
</dbReference>
<dbReference type="SUPFAM" id="SSF51905">
    <property type="entry name" value="FAD/NAD(P)-binding domain"/>
    <property type="match status" value="1"/>
</dbReference>
<dbReference type="PROSITE" id="PS01280">
    <property type="entry name" value="GIDA_1"/>
    <property type="match status" value="1"/>
</dbReference>
<dbReference type="PROSITE" id="PS01281">
    <property type="entry name" value="GIDA_2"/>
    <property type="match status" value="1"/>
</dbReference>
<feature type="chain" id="PRO_0000345284" description="tRNA uridine 5-carboxymethylaminomethyl modification enzyme MnmG">
    <location>
        <begin position="1"/>
        <end position="633"/>
    </location>
</feature>
<feature type="region of interest" description="Disordered" evidence="2">
    <location>
        <begin position="208"/>
        <end position="232"/>
    </location>
</feature>
<feature type="compositionally biased region" description="Basic and acidic residues" evidence="2">
    <location>
        <begin position="216"/>
        <end position="229"/>
    </location>
</feature>
<feature type="binding site" evidence="1">
    <location>
        <begin position="18"/>
        <end position="23"/>
    </location>
    <ligand>
        <name>FAD</name>
        <dbReference type="ChEBI" id="CHEBI:57692"/>
    </ligand>
</feature>
<feature type="binding site" evidence="1">
    <location>
        <begin position="279"/>
        <end position="293"/>
    </location>
    <ligand>
        <name>NAD(+)</name>
        <dbReference type="ChEBI" id="CHEBI:57540"/>
    </ligand>
</feature>
<comment type="function">
    <text evidence="1">NAD-binding protein involved in the addition of a carboxymethylaminomethyl (cmnm) group at the wobble position (U34) of certain tRNAs, forming tRNA-cmnm(5)s(2)U34.</text>
</comment>
<comment type="cofactor">
    <cofactor evidence="1">
        <name>FAD</name>
        <dbReference type="ChEBI" id="CHEBI:57692"/>
    </cofactor>
</comment>
<comment type="subunit">
    <text evidence="1">Homodimer. Heterotetramer of two MnmE and two MnmG subunits.</text>
</comment>
<comment type="subcellular location">
    <subcellularLocation>
        <location evidence="1">Cytoplasm</location>
    </subcellularLocation>
</comment>
<comment type="similarity">
    <text evidence="1">Belongs to the MnmG family.</text>
</comment>
<accession>Q033L1</accession>
<protein>
    <recommendedName>
        <fullName evidence="1">tRNA uridine 5-carboxymethylaminomethyl modification enzyme MnmG</fullName>
    </recommendedName>
    <alternativeName>
        <fullName evidence="1">Glucose-inhibited division protein A</fullName>
    </alternativeName>
</protein>
<keyword id="KW-0963">Cytoplasm</keyword>
<keyword id="KW-0274">FAD</keyword>
<keyword id="KW-0285">Flavoprotein</keyword>
<keyword id="KW-0520">NAD</keyword>
<keyword id="KW-1185">Reference proteome</keyword>
<keyword id="KW-0819">tRNA processing</keyword>
<evidence type="ECO:0000255" key="1">
    <source>
        <dbReference type="HAMAP-Rule" id="MF_00129"/>
    </source>
</evidence>
<evidence type="ECO:0000256" key="2">
    <source>
        <dbReference type="SAM" id="MobiDB-lite"/>
    </source>
</evidence>
<gene>
    <name evidence="1" type="primary">mnmG</name>
    <name evidence="1" type="synonym">gidA</name>
    <name type="ordered locus">LSEI_2903</name>
</gene>
<proteinExistence type="inferred from homology"/>
<reference key="1">
    <citation type="journal article" date="2006" name="Proc. Natl. Acad. Sci. U.S.A.">
        <title>Comparative genomics of the lactic acid bacteria.</title>
        <authorList>
            <person name="Makarova K.S."/>
            <person name="Slesarev A."/>
            <person name="Wolf Y.I."/>
            <person name="Sorokin A."/>
            <person name="Mirkin B."/>
            <person name="Koonin E.V."/>
            <person name="Pavlov A."/>
            <person name="Pavlova N."/>
            <person name="Karamychev V."/>
            <person name="Polouchine N."/>
            <person name="Shakhova V."/>
            <person name="Grigoriev I."/>
            <person name="Lou Y."/>
            <person name="Rohksar D."/>
            <person name="Lucas S."/>
            <person name="Huang K."/>
            <person name="Goodstein D.M."/>
            <person name="Hawkins T."/>
            <person name="Plengvidhya V."/>
            <person name="Welker D."/>
            <person name="Hughes J."/>
            <person name="Goh Y."/>
            <person name="Benson A."/>
            <person name="Baldwin K."/>
            <person name="Lee J.-H."/>
            <person name="Diaz-Muniz I."/>
            <person name="Dosti B."/>
            <person name="Smeianov V."/>
            <person name="Wechter W."/>
            <person name="Barabote R."/>
            <person name="Lorca G."/>
            <person name="Altermann E."/>
            <person name="Barrangou R."/>
            <person name="Ganesan B."/>
            <person name="Xie Y."/>
            <person name="Rawsthorne H."/>
            <person name="Tamir D."/>
            <person name="Parker C."/>
            <person name="Breidt F."/>
            <person name="Broadbent J.R."/>
            <person name="Hutkins R."/>
            <person name="O'Sullivan D."/>
            <person name="Steele J."/>
            <person name="Unlu G."/>
            <person name="Saier M.H. Jr."/>
            <person name="Klaenhammer T."/>
            <person name="Richardson P."/>
            <person name="Kozyavkin S."/>
            <person name="Weimer B.C."/>
            <person name="Mills D.A."/>
        </authorList>
    </citation>
    <scope>NUCLEOTIDE SEQUENCE [LARGE SCALE GENOMIC DNA]</scope>
    <source>
        <strain>ATCC 334 / BCRC 17002 / CCUG 31169 / CIP 107868 / KCTC 3260 / NRRL B-441</strain>
    </source>
</reference>
<organism>
    <name type="scientific">Lacticaseibacillus paracasei (strain ATCC 334 / BCRC 17002 / CCUG 31169 / CIP 107868 / KCTC 3260 / NRRL B-441)</name>
    <name type="common">Lactobacillus paracasei</name>
    <dbReference type="NCBI Taxonomy" id="321967"/>
    <lineage>
        <taxon>Bacteria</taxon>
        <taxon>Bacillati</taxon>
        <taxon>Bacillota</taxon>
        <taxon>Bacilli</taxon>
        <taxon>Lactobacillales</taxon>
        <taxon>Lactobacillaceae</taxon>
        <taxon>Lacticaseibacillus</taxon>
    </lineage>
</organism>
<name>MNMG_LACP3</name>
<sequence length="633" mass="69903">MPDVKKFEAGTYDVIVVGAGHAGCEAALAAARMGQKTLLLTISLEMLAFMPCNPSLGGPAKGIVVREIDALGGEMGKNIDRTYIQMRMLNTGKGPAVRALRAQADKAAYHRSMKHVIENTPNLDLRQGLATEVLVENGQAVGIVAATGAMYRAKSVVLTAGTSSRGKIIIGELMYSSGPNNSLPSIKLSENLEQLGFKLRRFKTGTPPRVNGNTIDFDKTEEQPGDKTPNHFSFTTPDSVYLKDQLSCWMTYTNATTHQIIRDNLDRAPMFSGVIKGVGPRYCPSIEDKIVRFADKPRHQLFLEPEGRDTSEYYVGDFSTSMPEEIQLKMLHSVAGLEHAELMRAGYAIEYDVIEPWQLKATLETKVVDNLFTAGQMNGTSGYEEAAGQGIMAGINAALRAQGKGPFTLKRSDAYIGVMIDDLVTKGTNEPYRLLTSRAEYRLLLRHDNADLRLKPMGHELGLISDERYAEFLAKRQAIETELNRLNTTRLKPKDVNPWLEAHHYAPLKDGVLASDFLKRPEIDYQTMAQFLPDNPTLDHRVIEQVEIQIKYAGYIAKEEASVAKLKRLEGKKIPLRINYAAINGLATEARQKLVKIQPETIAQASRISGVNPADVAILSVYIEQGRISKVAQ</sequence>